<keyword id="KW-0058">Aromatic hydrocarbons catabolism</keyword>
<keyword id="KW-0285">Flavoprotein</keyword>
<keyword id="KW-0288">FMN</keyword>
<keyword id="KW-0520">NAD</keyword>
<keyword id="KW-0560">Oxidoreductase</keyword>
<keyword id="KW-1185">Reference proteome</keyword>
<comment type="function">
    <text evidence="1">Catalyzes the reduction of free flavins (FMN, FAD and riboflavin) by NADH. Subsequently, the reduced flavins diffuse to the large HpaB component or to other electron acceptors such as cytochrome c and Fe(3+) ion (By similarity).</text>
</comment>
<comment type="catalytic activity">
    <reaction>
        <text>a reduced flavin + NAD(+) = an oxidized flavin + NADH + 2 H(+)</text>
        <dbReference type="Rhea" id="RHEA:31303"/>
        <dbReference type="ChEBI" id="CHEBI:15378"/>
        <dbReference type="ChEBI" id="CHEBI:57540"/>
        <dbReference type="ChEBI" id="CHEBI:57945"/>
        <dbReference type="ChEBI" id="CHEBI:60531"/>
        <dbReference type="ChEBI" id="CHEBI:62787"/>
        <dbReference type="EC" id="1.5.1.36"/>
    </reaction>
</comment>
<comment type="pathway">
    <text>Aromatic compound metabolism; 4-hydroxyphenylacetate degradation; pyruvate and succinate semialdehyde from 4-hydroxyphenylacetate: step 1/7.</text>
</comment>
<comment type="subunit">
    <text evidence="1">Homodimer. 4-HPA 3-monooxygenase consists of a reductase component HpaC and an oxygenase component HpaB (By similarity).</text>
</comment>
<comment type="similarity">
    <text evidence="2">Belongs to the non-flavoprotein flavin reductase family. HpaC subfamily.</text>
</comment>
<dbReference type="EC" id="1.5.1.36"/>
<dbReference type="EMBL" id="AE006468">
    <property type="protein sequence ID" value="AAL20030.1"/>
    <property type="molecule type" value="Genomic_DNA"/>
</dbReference>
<dbReference type="RefSeq" id="NP_460071.1">
    <property type="nucleotide sequence ID" value="NC_003197.2"/>
</dbReference>
<dbReference type="RefSeq" id="WP_001195556.1">
    <property type="nucleotide sequence ID" value="NC_003197.2"/>
</dbReference>
<dbReference type="SMR" id="Q8ZQ51"/>
<dbReference type="STRING" id="99287.STM1098"/>
<dbReference type="PaxDb" id="99287-STM1098"/>
<dbReference type="GeneID" id="1252616"/>
<dbReference type="KEGG" id="stm:STM1098"/>
<dbReference type="PATRIC" id="fig|99287.12.peg.1162"/>
<dbReference type="HOGENOM" id="CLU_059021_2_2_6"/>
<dbReference type="OMA" id="VCINRNS"/>
<dbReference type="PhylomeDB" id="Q8ZQ51"/>
<dbReference type="BioCyc" id="SENT99287:STM1098-MONOMER"/>
<dbReference type="UniPathway" id="UPA00208">
    <property type="reaction ID" value="UER00416"/>
</dbReference>
<dbReference type="Proteomes" id="UP000001014">
    <property type="component" value="Chromosome"/>
</dbReference>
<dbReference type="GO" id="GO:0036382">
    <property type="term" value="F:flavin reductase (NADH) activity"/>
    <property type="evidence" value="ECO:0007669"/>
    <property type="project" value="UniProtKB-EC"/>
</dbReference>
<dbReference type="GO" id="GO:0010181">
    <property type="term" value="F:FMN binding"/>
    <property type="evidence" value="ECO:0007669"/>
    <property type="project" value="InterPro"/>
</dbReference>
<dbReference type="GO" id="GO:0051287">
    <property type="term" value="F:NAD binding"/>
    <property type="evidence" value="ECO:0007669"/>
    <property type="project" value="InterPro"/>
</dbReference>
<dbReference type="GO" id="GO:0016651">
    <property type="term" value="F:oxidoreductase activity, acting on NAD(P)H"/>
    <property type="evidence" value="ECO:0007669"/>
    <property type="project" value="InterPro"/>
</dbReference>
<dbReference type="GO" id="GO:0042602">
    <property type="term" value="F:riboflavin reductase (NADPH) activity"/>
    <property type="evidence" value="ECO:0000318"/>
    <property type="project" value="GO_Central"/>
</dbReference>
<dbReference type="GO" id="GO:0042537">
    <property type="term" value="P:benzene-containing compound metabolic process"/>
    <property type="evidence" value="ECO:0007669"/>
    <property type="project" value="InterPro"/>
</dbReference>
<dbReference type="GO" id="GO:0006208">
    <property type="term" value="P:pyrimidine nucleobase catabolic process"/>
    <property type="evidence" value="ECO:0000318"/>
    <property type="project" value="GO_Central"/>
</dbReference>
<dbReference type="FunFam" id="2.30.110.10:FF:000002">
    <property type="entry name" value="FMN reductase (NADH) RutF"/>
    <property type="match status" value="1"/>
</dbReference>
<dbReference type="Gene3D" id="2.30.110.10">
    <property type="entry name" value="Electron Transport, Fmn-binding Protein, Chain A"/>
    <property type="match status" value="1"/>
</dbReference>
<dbReference type="InterPro" id="IPR002563">
    <property type="entry name" value="Flavin_Rdtase-like_dom"/>
</dbReference>
<dbReference type="InterPro" id="IPR011982">
    <property type="entry name" value="HPA_mOase_red"/>
</dbReference>
<dbReference type="InterPro" id="IPR050268">
    <property type="entry name" value="NADH-dep_flavin_reductase"/>
</dbReference>
<dbReference type="InterPro" id="IPR012349">
    <property type="entry name" value="Split_barrel_FMN-bd"/>
</dbReference>
<dbReference type="NCBIfam" id="TIGR02296">
    <property type="entry name" value="HpaC"/>
    <property type="match status" value="1"/>
</dbReference>
<dbReference type="NCBIfam" id="NF012030">
    <property type="entry name" value="PRK15486.1"/>
    <property type="match status" value="1"/>
</dbReference>
<dbReference type="PANTHER" id="PTHR30466">
    <property type="entry name" value="FLAVIN REDUCTASE"/>
    <property type="match status" value="1"/>
</dbReference>
<dbReference type="PANTHER" id="PTHR30466:SF1">
    <property type="entry name" value="FMN REDUCTASE (NADH) RUTF"/>
    <property type="match status" value="1"/>
</dbReference>
<dbReference type="Pfam" id="PF01613">
    <property type="entry name" value="Flavin_Reduct"/>
    <property type="match status" value="1"/>
</dbReference>
<dbReference type="SMART" id="SM00903">
    <property type="entry name" value="Flavin_Reduct"/>
    <property type="match status" value="1"/>
</dbReference>
<dbReference type="SUPFAM" id="SSF50475">
    <property type="entry name" value="FMN-binding split barrel"/>
    <property type="match status" value="1"/>
</dbReference>
<evidence type="ECO:0000250" key="1"/>
<evidence type="ECO:0000305" key="2"/>
<name>HPAC_SALTY</name>
<sequence length="170" mass="18481">MQVDEQRLRFRDAMASLAAAVNIVTTAGHAGRCGITATAVCSVTDTPPSVMVCINANSAMNPVFQGNGRLCINVLNHEQELMARHFAGMTGMAMEERFHQPCWQNGPLGQPVLNGALAGLEGEISEVQTIGTHLVYLVAIKNIILSQDGHGLIYFKRRFHPVRLEMEAPV</sequence>
<reference key="1">
    <citation type="journal article" date="2001" name="Nature">
        <title>Complete genome sequence of Salmonella enterica serovar Typhimurium LT2.</title>
        <authorList>
            <person name="McClelland M."/>
            <person name="Sanderson K.E."/>
            <person name="Spieth J."/>
            <person name="Clifton S.W."/>
            <person name="Latreille P."/>
            <person name="Courtney L."/>
            <person name="Porwollik S."/>
            <person name="Ali J."/>
            <person name="Dante M."/>
            <person name="Du F."/>
            <person name="Hou S."/>
            <person name="Layman D."/>
            <person name="Leonard S."/>
            <person name="Nguyen C."/>
            <person name="Scott K."/>
            <person name="Holmes A."/>
            <person name="Grewal N."/>
            <person name="Mulvaney E."/>
            <person name="Ryan E."/>
            <person name="Sun H."/>
            <person name="Florea L."/>
            <person name="Miller W."/>
            <person name="Stoneking T."/>
            <person name="Nhan M."/>
            <person name="Waterston R."/>
            <person name="Wilson R.K."/>
        </authorList>
    </citation>
    <scope>NUCLEOTIDE SEQUENCE [LARGE SCALE GENOMIC DNA]</scope>
    <source>
        <strain>LT2 / SGSC1412 / ATCC 700720</strain>
    </source>
</reference>
<feature type="chain" id="PRO_0000085536" description="4-hydroxyphenylacetate 3-monooxygenase reductase component">
    <location>
        <begin position="1"/>
        <end position="170"/>
    </location>
</feature>
<accession>Q8ZQ51</accession>
<gene>
    <name type="primary">hpaC</name>
    <name type="ordered locus">STM1098</name>
</gene>
<organism>
    <name type="scientific">Salmonella typhimurium (strain LT2 / SGSC1412 / ATCC 700720)</name>
    <dbReference type="NCBI Taxonomy" id="99287"/>
    <lineage>
        <taxon>Bacteria</taxon>
        <taxon>Pseudomonadati</taxon>
        <taxon>Pseudomonadota</taxon>
        <taxon>Gammaproteobacteria</taxon>
        <taxon>Enterobacterales</taxon>
        <taxon>Enterobacteriaceae</taxon>
        <taxon>Salmonella</taxon>
    </lineage>
</organism>
<proteinExistence type="inferred from homology"/>
<protein>
    <recommendedName>
        <fullName>4-hydroxyphenylacetate 3-monooxygenase reductase component</fullName>
        <ecNumber>1.5.1.36</ecNumber>
    </recommendedName>
    <alternativeName>
        <fullName>4-HPA 3-monooxygenase small component</fullName>
    </alternativeName>
    <alternativeName>
        <fullName>Flavin:NADH reductase</fullName>
    </alternativeName>
</protein>